<keyword id="KW-0963">Cytoplasm</keyword>
<keyword id="KW-1185">Reference proteome</keyword>
<keyword id="KW-0704">Schiff base</keyword>
<keyword id="KW-0784">Thiamine biosynthesis</keyword>
<keyword id="KW-0808">Transferase</keyword>
<name>THIG_AROAE</name>
<organism>
    <name type="scientific">Aromatoleum aromaticum (strain DSM 19018 / LMG 30748 / EbN1)</name>
    <name type="common">Azoarcus sp. (strain EbN1)</name>
    <dbReference type="NCBI Taxonomy" id="76114"/>
    <lineage>
        <taxon>Bacteria</taxon>
        <taxon>Pseudomonadati</taxon>
        <taxon>Pseudomonadota</taxon>
        <taxon>Betaproteobacteria</taxon>
        <taxon>Rhodocyclales</taxon>
        <taxon>Rhodocyclaceae</taxon>
        <taxon>Aromatoleum</taxon>
    </lineage>
</organism>
<proteinExistence type="inferred from homology"/>
<dbReference type="EC" id="2.8.1.10" evidence="1"/>
<dbReference type="EMBL" id="CR555306">
    <property type="protein sequence ID" value="CAI07421.1"/>
    <property type="molecule type" value="Genomic_DNA"/>
</dbReference>
<dbReference type="RefSeq" id="WP_011237141.1">
    <property type="nucleotide sequence ID" value="NC_006513.1"/>
</dbReference>
<dbReference type="SMR" id="Q5P5J1"/>
<dbReference type="STRING" id="76114.c1A46"/>
<dbReference type="KEGG" id="eba:c1A46"/>
<dbReference type="eggNOG" id="COG2022">
    <property type="taxonomic scope" value="Bacteria"/>
</dbReference>
<dbReference type="HOGENOM" id="CLU_062233_1_1_4"/>
<dbReference type="OrthoDB" id="9805935at2"/>
<dbReference type="UniPathway" id="UPA00060"/>
<dbReference type="Proteomes" id="UP000006552">
    <property type="component" value="Chromosome"/>
</dbReference>
<dbReference type="GO" id="GO:0005737">
    <property type="term" value="C:cytoplasm"/>
    <property type="evidence" value="ECO:0007669"/>
    <property type="project" value="UniProtKB-SubCell"/>
</dbReference>
<dbReference type="GO" id="GO:1990107">
    <property type="term" value="F:thiazole synthase activity"/>
    <property type="evidence" value="ECO:0007669"/>
    <property type="project" value="UniProtKB-EC"/>
</dbReference>
<dbReference type="GO" id="GO:0009229">
    <property type="term" value="P:thiamine diphosphate biosynthetic process"/>
    <property type="evidence" value="ECO:0007669"/>
    <property type="project" value="UniProtKB-UniRule"/>
</dbReference>
<dbReference type="CDD" id="cd04728">
    <property type="entry name" value="ThiG"/>
    <property type="match status" value="1"/>
</dbReference>
<dbReference type="Gene3D" id="3.20.20.70">
    <property type="entry name" value="Aldolase class I"/>
    <property type="match status" value="1"/>
</dbReference>
<dbReference type="HAMAP" id="MF_00443">
    <property type="entry name" value="ThiG"/>
    <property type="match status" value="1"/>
</dbReference>
<dbReference type="InterPro" id="IPR013785">
    <property type="entry name" value="Aldolase_TIM"/>
</dbReference>
<dbReference type="InterPro" id="IPR033983">
    <property type="entry name" value="Thiazole_synthase_ThiG"/>
</dbReference>
<dbReference type="InterPro" id="IPR008867">
    <property type="entry name" value="ThiG"/>
</dbReference>
<dbReference type="PANTHER" id="PTHR34266">
    <property type="entry name" value="THIAZOLE SYNTHASE"/>
    <property type="match status" value="1"/>
</dbReference>
<dbReference type="PANTHER" id="PTHR34266:SF2">
    <property type="entry name" value="THIAZOLE SYNTHASE"/>
    <property type="match status" value="1"/>
</dbReference>
<dbReference type="Pfam" id="PF05690">
    <property type="entry name" value="ThiG"/>
    <property type="match status" value="1"/>
</dbReference>
<dbReference type="SUPFAM" id="SSF110399">
    <property type="entry name" value="ThiG-like"/>
    <property type="match status" value="1"/>
</dbReference>
<feature type="chain" id="PRO_0000162778" description="Thiazole synthase">
    <location>
        <begin position="1"/>
        <end position="261"/>
    </location>
</feature>
<feature type="active site" description="Schiff-base intermediate with DXP" evidence="1">
    <location>
        <position position="101"/>
    </location>
</feature>
<feature type="binding site" evidence="1">
    <location>
        <position position="162"/>
    </location>
    <ligand>
        <name>1-deoxy-D-xylulose 5-phosphate</name>
        <dbReference type="ChEBI" id="CHEBI:57792"/>
    </ligand>
</feature>
<feature type="binding site" evidence="1">
    <location>
        <begin position="188"/>
        <end position="189"/>
    </location>
    <ligand>
        <name>1-deoxy-D-xylulose 5-phosphate</name>
        <dbReference type="ChEBI" id="CHEBI:57792"/>
    </ligand>
</feature>
<feature type="binding site" evidence="1">
    <location>
        <begin position="210"/>
        <end position="211"/>
    </location>
    <ligand>
        <name>1-deoxy-D-xylulose 5-phosphate</name>
        <dbReference type="ChEBI" id="CHEBI:57792"/>
    </ligand>
</feature>
<comment type="function">
    <text evidence="1">Catalyzes the rearrangement of 1-deoxy-D-xylulose 5-phosphate (DXP) to produce the thiazole phosphate moiety of thiamine. Sulfur is provided by the thiocarboxylate moiety of the carrier protein ThiS. In vitro, sulfur can be provided by H(2)S.</text>
</comment>
<comment type="catalytic activity">
    <reaction evidence="1">
        <text>[ThiS sulfur-carrier protein]-C-terminal-Gly-aminoethanethioate + 2-iminoacetate + 1-deoxy-D-xylulose 5-phosphate = [ThiS sulfur-carrier protein]-C-terminal Gly-Gly + 2-[(2R,5Z)-2-carboxy-4-methylthiazol-5(2H)-ylidene]ethyl phosphate + 2 H2O + H(+)</text>
        <dbReference type="Rhea" id="RHEA:26297"/>
        <dbReference type="Rhea" id="RHEA-COMP:12909"/>
        <dbReference type="Rhea" id="RHEA-COMP:19908"/>
        <dbReference type="ChEBI" id="CHEBI:15377"/>
        <dbReference type="ChEBI" id="CHEBI:15378"/>
        <dbReference type="ChEBI" id="CHEBI:57792"/>
        <dbReference type="ChEBI" id="CHEBI:62899"/>
        <dbReference type="ChEBI" id="CHEBI:77846"/>
        <dbReference type="ChEBI" id="CHEBI:90778"/>
        <dbReference type="ChEBI" id="CHEBI:232372"/>
        <dbReference type="EC" id="2.8.1.10"/>
    </reaction>
</comment>
<comment type="pathway">
    <text evidence="1">Cofactor biosynthesis; thiamine diphosphate biosynthesis.</text>
</comment>
<comment type="subunit">
    <text evidence="1">Homotetramer. Forms heterodimers with either ThiH or ThiS.</text>
</comment>
<comment type="subcellular location">
    <subcellularLocation>
        <location evidence="1">Cytoplasm</location>
    </subcellularLocation>
</comment>
<comment type="similarity">
    <text evidence="1">Belongs to the ThiG family.</text>
</comment>
<sequence length="261" mass="27592">MNDSLTIAGKSYRSRLLVGTGKYKDFAETRAAIDASGAEIVTVAIRRTNIGQNADEPNLLDVLPPERFTILPNTAGCYTADDAVRTLRLARELLDGHALVKLEVLGDPVSLFPNMPETLKAAETLVKDGFQVMVYCADDPIQAKMLEDIGCVAVMPLASLIGSGMGILNPWNLRLIIDQANVPVLVDAGVGTASDAAIAMELGCDGVLMNTAIAHAKDPVLMASAMKKAVEAGREAFLAGRMPRKHYSADPSSPTSGLIGS</sequence>
<protein>
    <recommendedName>
        <fullName evidence="1">Thiazole synthase</fullName>
        <ecNumber evidence="1">2.8.1.10</ecNumber>
    </recommendedName>
</protein>
<evidence type="ECO:0000255" key="1">
    <source>
        <dbReference type="HAMAP-Rule" id="MF_00443"/>
    </source>
</evidence>
<reference key="1">
    <citation type="journal article" date="2005" name="Arch. Microbiol.">
        <title>The genome sequence of an anaerobic aromatic-degrading denitrifying bacterium, strain EbN1.</title>
        <authorList>
            <person name="Rabus R."/>
            <person name="Kube M."/>
            <person name="Heider J."/>
            <person name="Beck A."/>
            <person name="Heitmann K."/>
            <person name="Widdel F."/>
            <person name="Reinhardt R."/>
        </authorList>
    </citation>
    <scope>NUCLEOTIDE SEQUENCE [LARGE SCALE GENOMIC DNA]</scope>
    <source>
        <strain>DSM 19018 / LMG 30748 / EbN1</strain>
    </source>
</reference>
<gene>
    <name evidence="1" type="primary">thiG</name>
    <name type="ordered locus">AZOSEA12960</name>
    <name type="ORF">c1A46</name>
</gene>
<accession>Q5P5J1</accession>